<name>YBGC_SHIFL</name>
<gene>
    <name type="primary">ybgC</name>
    <name type="ordered locus">SF0561</name>
    <name type="ordered locus">S0574</name>
</gene>
<proteinExistence type="inferred from homology"/>
<protein>
    <recommendedName>
        <fullName>Acyl-CoA thioester hydrolase YbgC</fullName>
        <shortName>Acyl-CoA thioesterase</shortName>
        <ecNumber>3.1.2.-</ecNumber>
    </recommendedName>
</protein>
<dbReference type="EC" id="3.1.2.-"/>
<dbReference type="EMBL" id="AE005674">
    <property type="protein sequence ID" value="AAN42205.1"/>
    <property type="molecule type" value="Genomic_DNA"/>
</dbReference>
<dbReference type="EMBL" id="AE014073">
    <property type="protein sequence ID" value="AAP16078.1"/>
    <property type="molecule type" value="Genomic_DNA"/>
</dbReference>
<dbReference type="RefSeq" id="NP_706498.1">
    <property type="nucleotide sequence ID" value="NC_004337.2"/>
</dbReference>
<dbReference type="RefSeq" id="WP_001098384.1">
    <property type="nucleotide sequence ID" value="NZ_WPGW01000046.1"/>
</dbReference>
<dbReference type="SMR" id="P0A8Z6"/>
<dbReference type="STRING" id="198214.SF0561"/>
<dbReference type="PaxDb" id="198214-SF0561"/>
<dbReference type="GeneID" id="1023534"/>
<dbReference type="GeneID" id="93776748"/>
<dbReference type="KEGG" id="sfl:SF0561"/>
<dbReference type="KEGG" id="sfx:S0574"/>
<dbReference type="PATRIC" id="fig|198214.7.peg.650"/>
<dbReference type="HOGENOM" id="CLU_101141_7_2_6"/>
<dbReference type="Proteomes" id="UP000001006">
    <property type="component" value="Chromosome"/>
</dbReference>
<dbReference type="Proteomes" id="UP000002673">
    <property type="component" value="Chromosome"/>
</dbReference>
<dbReference type="GO" id="GO:0005886">
    <property type="term" value="C:plasma membrane"/>
    <property type="evidence" value="ECO:0007669"/>
    <property type="project" value="UniProtKB-SubCell"/>
</dbReference>
<dbReference type="GO" id="GO:0047617">
    <property type="term" value="F:fatty acyl-CoA hydrolase activity"/>
    <property type="evidence" value="ECO:0007669"/>
    <property type="project" value="TreeGrafter"/>
</dbReference>
<dbReference type="GO" id="GO:0006629">
    <property type="term" value="P:lipid metabolic process"/>
    <property type="evidence" value="ECO:0007669"/>
    <property type="project" value="UniProtKB-KW"/>
</dbReference>
<dbReference type="CDD" id="cd00586">
    <property type="entry name" value="4HBT"/>
    <property type="match status" value="1"/>
</dbReference>
<dbReference type="FunFam" id="3.10.129.10:FF:000004">
    <property type="entry name" value="Tol-pal system-associated acyl-CoA thioesterase"/>
    <property type="match status" value="1"/>
</dbReference>
<dbReference type="Gene3D" id="3.10.129.10">
    <property type="entry name" value="Hotdog Thioesterase"/>
    <property type="match status" value="1"/>
</dbReference>
<dbReference type="InterPro" id="IPR050563">
    <property type="entry name" value="4-hydroxybenzoyl-CoA_TE"/>
</dbReference>
<dbReference type="InterPro" id="IPR008272">
    <property type="entry name" value="HB-CoA_thioesterase_AS"/>
</dbReference>
<dbReference type="InterPro" id="IPR029069">
    <property type="entry name" value="HotDog_dom_sf"/>
</dbReference>
<dbReference type="InterPro" id="IPR006683">
    <property type="entry name" value="Thioestr_dom"/>
</dbReference>
<dbReference type="InterPro" id="IPR014166">
    <property type="entry name" value="Tol-Pal_acyl-CoA_thioesterase"/>
</dbReference>
<dbReference type="InterPro" id="IPR006684">
    <property type="entry name" value="YbgC/YbaW"/>
</dbReference>
<dbReference type="NCBIfam" id="NF008065">
    <property type="entry name" value="PRK10800.1"/>
    <property type="match status" value="1"/>
</dbReference>
<dbReference type="NCBIfam" id="TIGR02799">
    <property type="entry name" value="thio_ybgC"/>
    <property type="match status" value="1"/>
</dbReference>
<dbReference type="NCBIfam" id="TIGR00051">
    <property type="entry name" value="YbgC/FadM family acyl-CoA thioesterase"/>
    <property type="match status" value="1"/>
</dbReference>
<dbReference type="PANTHER" id="PTHR31793">
    <property type="entry name" value="4-HYDROXYBENZOYL-COA THIOESTERASE FAMILY MEMBER"/>
    <property type="match status" value="1"/>
</dbReference>
<dbReference type="PANTHER" id="PTHR31793:SF37">
    <property type="entry name" value="ACYL-COA THIOESTER HYDROLASE YBGC"/>
    <property type="match status" value="1"/>
</dbReference>
<dbReference type="Pfam" id="PF03061">
    <property type="entry name" value="4HBT"/>
    <property type="match status" value="1"/>
</dbReference>
<dbReference type="PIRSF" id="PIRSF003230">
    <property type="entry name" value="YbgC"/>
    <property type="match status" value="1"/>
</dbReference>
<dbReference type="SUPFAM" id="SSF54637">
    <property type="entry name" value="Thioesterase/thiol ester dehydrase-isomerase"/>
    <property type="match status" value="1"/>
</dbReference>
<dbReference type="PROSITE" id="PS01328">
    <property type="entry name" value="4HBCOA_THIOESTERASE"/>
    <property type="match status" value="1"/>
</dbReference>
<organism>
    <name type="scientific">Shigella flexneri</name>
    <dbReference type="NCBI Taxonomy" id="623"/>
    <lineage>
        <taxon>Bacteria</taxon>
        <taxon>Pseudomonadati</taxon>
        <taxon>Pseudomonadota</taxon>
        <taxon>Gammaproteobacteria</taxon>
        <taxon>Enterobacterales</taxon>
        <taxon>Enterobacteriaceae</taxon>
        <taxon>Shigella</taxon>
    </lineage>
</organism>
<keyword id="KW-0997">Cell inner membrane</keyword>
<keyword id="KW-1003">Cell membrane</keyword>
<keyword id="KW-0378">Hydrolase</keyword>
<keyword id="KW-0443">Lipid metabolism</keyword>
<keyword id="KW-0472">Membrane</keyword>
<keyword id="KW-1185">Reference proteome</keyword>
<feature type="chain" id="PRO_0000087765" description="Acyl-CoA thioester hydrolase YbgC">
    <location>
        <begin position="1"/>
        <end position="134"/>
    </location>
</feature>
<feature type="active site" evidence="2">
    <location>
        <position position="18"/>
    </location>
</feature>
<reference key="1">
    <citation type="journal article" date="2002" name="Nucleic Acids Res.">
        <title>Genome sequence of Shigella flexneri 2a: insights into pathogenicity through comparison with genomes of Escherichia coli K12 and O157.</title>
        <authorList>
            <person name="Jin Q."/>
            <person name="Yuan Z."/>
            <person name="Xu J."/>
            <person name="Wang Y."/>
            <person name="Shen Y."/>
            <person name="Lu W."/>
            <person name="Wang J."/>
            <person name="Liu H."/>
            <person name="Yang J."/>
            <person name="Yang F."/>
            <person name="Zhang X."/>
            <person name="Zhang J."/>
            <person name="Yang G."/>
            <person name="Wu H."/>
            <person name="Qu D."/>
            <person name="Dong J."/>
            <person name="Sun L."/>
            <person name="Xue Y."/>
            <person name="Zhao A."/>
            <person name="Gao Y."/>
            <person name="Zhu J."/>
            <person name="Kan B."/>
            <person name="Ding K."/>
            <person name="Chen S."/>
            <person name="Cheng H."/>
            <person name="Yao Z."/>
            <person name="He B."/>
            <person name="Chen R."/>
            <person name="Ma D."/>
            <person name="Qiang B."/>
            <person name="Wen Y."/>
            <person name="Hou Y."/>
            <person name="Yu J."/>
        </authorList>
    </citation>
    <scope>NUCLEOTIDE SEQUENCE [LARGE SCALE GENOMIC DNA]</scope>
    <source>
        <strain>301 / Serotype 2a</strain>
    </source>
</reference>
<reference key="2">
    <citation type="journal article" date="2003" name="Infect. Immun.">
        <title>Complete genome sequence and comparative genomics of Shigella flexneri serotype 2a strain 2457T.</title>
        <authorList>
            <person name="Wei J."/>
            <person name="Goldberg M.B."/>
            <person name="Burland V."/>
            <person name="Venkatesan M.M."/>
            <person name="Deng W."/>
            <person name="Fournier G."/>
            <person name="Mayhew G.F."/>
            <person name="Plunkett G. III"/>
            <person name="Rose D.J."/>
            <person name="Darling A."/>
            <person name="Mau B."/>
            <person name="Perna N.T."/>
            <person name="Payne S.M."/>
            <person name="Runyen-Janecky L.J."/>
            <person name="Zhou S."/>
            <person name="Schwartz D.C."/>
            <person name="Blattner F.R."/>
        </authorList>
    </citation>
    <scope>NUCLEOTIDE SEQUENCE [LARGE SCALE GENOMIC DNA]</scope>
    <source>
        <strain>ATCC 700930 / 2457T / Serotype 2a</strain>
    </source>
</reference>
<comment type="function">
    <text evidence="1">Thioesterase that appears to be involved in phospholipid metabolism. Some specific acyl-ACPs could be physiological substrates. Displays acyl-CoA thioesterase activity on malonyl-CoA in vitro, catalyzing the hydrolysis of the thioester bond (By similarity).</text>
</comment>
<comment type="subcellular location">
    <subcellularLocation>
        <location evidence="1">Cell inner membrane</location>
        <topology evidence="1">Peripheral membrane protein</topology>
        <orientation evidence="1">Cytoplasmic side</orientation>
    </subcellularLocation>
</comment>
<comment type="similarity">
    <text evidence="3">Belongs to the 4-hydroxybenzoyl-CoA thioesterase family.</text>
</comment>
<sequence length="134" mass="15562">MNTTLFRWPVRVYYEDTDAGGVVYHASYVAFYERARTEMLRHHHFSQQALMAERVAFVVRKMTVEYYAPARLDDMLEIQTEITSMRGTSLVFTQRIVNAENTLLNEAEVLVVCVDPLKMKPRALPKSIVAEFKQ</sequence>
<evidence type="ECO:0000250" key="1"/>
<evidence type="ECO:0000255" key="2">
    <source>
        <dbReference type="PROSITE-ProRule" id="PRU10041"/>
    </source>
</evidence>
<evidence type="ECO:0000305" key="3"/>
<accession>P0A8Z6</accession>
<accession>P08999</accession>